<protein>
    <recommendedName>
        <fullName evidence="1">Small ribosomal subunit protein bS18</fullName>
    </recommendedName>
    <alternativeName>
        <fullName evidence="3">30S ribosomal protein S18</fullName>
    </alternativeName>
</protein>
<sequence length="82" mass="9439">MSETSSAPVRRPFHRRRKTCPFSGANAPRIDYKDVRLLQRYISERGKIVPSRITAVSQKKQRELAQAIKRARFLGLLPYVVA</sequence>
<gene>
    <name evidence="1" type="primary">rpsR</name>
    <name type="ordered locus">RL1554</name>
</gene>
<organism>
    <name type="scientific">Rhizobium johnstonii (strain DSM 114642 / LMG 32736 / 3841)</name>
    <name type="common">Rhizobium leguminosarum bv. viciae</name>
    <dbReference type="NCBI Taxonomy" id="216596"/>
    <lineage>
        <taxon>Bacteria</taxon>
        <taxon>Pseudomonadati</taxon>
        <taxon>Pseudomonadota</taxon>
        <taxon>Alphaproteobacteria</taxon>
        <taxon>Hyphomicrobiales</taxon>
        <taxon>Rhizobiaceae</taxon>
        <taxon>Rhizobium/Agrobacterium group</taxon>
        <taxon>Rhizobium</taxon>
        <taxon>Rhizobium johnstonii</taxon>
    </lineage>
</organism>
<reference key="1">
    <citation type="journal article" date="2006" name="Genome Biol.">
        <title>The genome of Rhizobium leguminosarum has recognizable core and accessory components.</title>
        <authorList>
            <person name="Young J.P.W."/>
            <person name="Crossman L.C."/>
            <person name="Johnston A.W.B."/>
            <person name="Thomson N.R."/>
            <person name="Ghazoui Z.F."/>
            <person name="Hull K.H."/>
            <person name="Wexler M."/>
            <person name="Curson A.R.J."/>
            <person name="Todd J.D."/>
            <person name="Poole P.S."/>
            <person name="Mauchline T.H."/>
            <person name="East A.K."/>
            <person name="Quail M.A."/>
            <person name="Churcher C."/>
            <person name="Arrowsmith C."/>
            <person name="Cherevach I."/>
            <person name="Chillingworth T."/>
            <person name="Clarke K."/>
            <person name="Cronin A."/>
            <person name="Davis P."/>
            <person name="Fraser A."/>
            <person name="Hance Z."/>
            <person name="Hauser H."/>
            <person name="Jagels K."/>
            <person name="Moule S."/>
            <person name="Mungall K."/>
            <person name="Norbertczak H."/>
            <person name="Rabbinowitsch E."/>
            <person name="Sanders M."/>
            <person name="Simmonds M."/>
            <person name="Whitehead S."/>
            <person name="Parkhill J."/>
        </authorList>
    </citation>
    <scope>NUCLEOTIDE SEQUENCE [LARGE SCALE GENOMIC DNA]</scope>
    <source>
        <strain>DSM 114642 / LMG 32736 / 3841</strain>
    </source>
</reference>
<accession>Q1MJ11</accession>
<comment type="function">
    <text evidence="1">Binds as a heterodimer with protein bS6 to the central domain of the 16S rRNA, where it helps stabilize the platform of the 30S subunit.</text>
</comment>
<comment type="subunit">
    <text evidence="1">Part of the 30S ribosomal subunit. Forms a tight heterodimer with protein bS6.</text>
</comment>
<comment type="similarity">
    <text evidence="1">Belongs to the bacterial ribosomal protein bS18 family.</text>
</comment>
<proteinExistence type="inferred from homology"/>
<dbReference type="EMBL" id="AM236080">
    <property type="protein sequence ID" value="CAK07049.1"/>
    <property type="molecule type" value="Genomic_DNA"/>
</dbReference>
<dbReference type="RefSeq" id="WP_003547038.1">
    <property type="nucleotide sequence ID" value="NC_008380.1"/>
</dbReference>
<dbReference type="SMR" id="Q1MJ11"/>
<dbReference type="EnsemblBacteria" id="CAK07049">
    <property type="protein sequence ID" value="CAK07049"/>
    <property type="gene ID" value="RL1554"/>
</dbReference>
<dbReference type="GeneID" id="84669244"/>
<dbReference type="KEGG" id="rle:RL1554"/>
<dbReference type="eggNOG" id="COG0238">
    <property type="taxonomic scope" value="Bacteria"/>
</dbReference>
<dbReference type="HOGENOM" id="CLU_148710_2_2_5"/>
<dbReference type="Proteomes" id="UP000006575">
    <property type="component" value="Chromosome"/>
</dbReference>
<dbReference type="GO" id="GO:0022627">
    <property type="term" value="C:cytosolic small ribosomal subunit"/>
    <property type="evidence" value="ECO:0007669"/>
    <property type="project" value="TreeGrafter"/>
</dbReference>
<dbReference type="GO" id="GO:0070181">
    <property type="term" value="F:small ribosomal subunit rRNA binding"/>
    <property type="evidence" value="ECO:0007669"/>
    <property type="project" value="TreeGrafter"/>
</dbReference>
<dbReference type="GO" id="GO:0003735">
    <property type="term" value="F:structural constituent of ribosome"/>
    <property type="evidence" value="ECO:0007669"/>
    <property type="project" value="InterPro"/>
</dbReference>
<dbReference type="GO" id="GO:0006412">
    <property type="term" value="P:translation"/>
    <property type="evidence" value="ECO:0007669"/>
    <property type="project" value="UniProtKB-UniRule"/>
</dbReference>
<dbReference type="Gene3D" id="4.10.640.10">
    <property type="entry name" value="Ribosomal protein S18"/>
    <property type="match status" value="1"/>
</dbReference>
<dbReference type="HAMAP" id="MF_00270">
    <property type="entry name" value="Ribosomal_bS18"/>
    <property type="match status" value="1"/>
</dbReference>
<dbReference type="InterPro" id="IPR001648">
    <property type="entry name" value="Ribosomal_bS18"/>
</dbReference>
<dbReference type="InterPro" id="IPR018275">
    <property type="entry name" value="Ribosomal_bS18_CS"/>
</dbReference>
<dbReference type="InterPro" id="IPR036870">
    <property type="entry name" value="Ribosomal_bS18_sf"/>
</dbReference>
<dbReference type="NCBIfam" id="TIGR00165">
    <property type="entry name" value="S18"/>
    <property type="match status" value="1"/>
</dbReference>
<dbReference type="PANTHER" id="PTHR13479">
    <property type="entry name" value="30S RIBOSOMAL PROTEIN S18"/>
    <property type="match status" value="1"/>
</dbReference>
<dbReference type="PANTHER" id="PTHR13479:SF40">
    <property type="entry name" value="SMALL RIBOSOMAL SUBUNIT PROTEIN BS18M"/>
    <property type="match status" value="1"/>
</dbReference>
<dbReference type="Pfam" id="PF01084">
    <property type="entry name" value="Ribosomal_S18"/>
    <property type="match status" value="1"/>
</dbReference>
<dbReference type="PRINTS" id="PR00974">
    <property type="entry name" value="RIBOSOMALS18"/>
</dbReference>
<dbReference type="SUPFAM" id="SSF46911">
    <property type="entry name" value="Ribosomal protein S18"/>
    <property type="match status" value="1"/>
</dbReference>
<dbReference type="PROSITE" id="PS00057">
    <property type="entry name" value="RIBOSOMAL_S18"/>
    <property type="match status" value="1"/>
</dbReference>
<evidence type="ECO:0000255" key="1">
    <source>
        <dbReference type="HAMAP-Rule" id="MF_00270"/>
    </source>
</evidence>
<evidence type="ECO:0000256" key="2">
    <source>
        <dbReference type="SAM" id="MobiDB-lite"/>
    </source>
</evidence>
<evidence type="ECO:0000305" key="3"/>
<name>RS18_RHIJ3</name>
<feature type="chain" id="PRO_1000003582" description="Small ribosomal subunit protein bS18">
    <location>
        <begin position="1"/>
        <end position="82"/>
    </location>
</feature>
<feature type="region of interest" description="Disordered" evidence="2">
    <location>
        <begin position="1"/>
        <end position="20"/>
    </location>
</feature>
<keyword id="KW-0687">Ribonucleoprotein</keyword>
<keyword id="KW-0689">Ribosomal protein</keyword>
<keyword id="KW-0694">RNA-binding</keyword>
<keyword id="KW-0699">rRNA-binding</keyword>